<proteinExistence type="inferred from homology"/>
<reference key="1">
    <citation type="journal article" date="2008" name="Appl. Environ. Microbiol.">
        <title>Genome of the epsilonproteobacterial chemolithoautotroph Sulfurimonas denitrificans.</title>
        <authorList>
            <person name="Sievert S.M."/>
            <person name="Scott K.M."/>
            <person name="Klotz M.G."/>
            <person name="Chain P.S.G."/>
            <person name="Hauser L.J."/>
            <person name="Hemp J."/>
            <person name="Huegler M."/>
            <person name="Land M."/>
            <person name="Lapidus A."/>
            <person name="Larimer F.W."/>
            <person name="Lucas S."/>
            <person name="Malfatti S.A."/>
            <person name="Meyer F."/>
            <person name="Paulsen I.T."/>
            <person name="Ren Q."/>
            <person name="Simon J."/>
            <person name="Bailey K."/>
            <person name="Diaz E."/>
            <person name="Fitzpatrick K.A."/>
            <person name="Glover B."/>
            <person name="Gwatney N."/>
            <person name="Korajkic A."/>
            <person name="Long A."/>
            <person name="Mobberley J.M."/>
            <person name="Pantry S.N."/>
            <person name="Pazder G."/>
            <person name="Peterson S."/>
            <person name="Quintanilla J.D."/>
            <person name="Sprinkle R."/>
            <person name="Stephens J."/>
            <person name="Thomas P."/>
            <person name="Vaughn R."/>
            <person name="Weber M.J."/>
            <person name="Wooten L.L."/>
        </authorList>
    </citation>
    <scope>NUCLEOTIDE SEQUENCE [LARGE SCALE GENOMIC DNA]</scope>
    <source>
        <strain>ATCC 33889 / DSM 1251</strain>
    </source>
</reference>
<accession>Q30QK9</accession>
<evidence type="ECO:0000255" key="1">
    <source>
        <dbReference type="HAMAP-Rule" id="MF_01690"/>
    </source>
</evidence>
<sequence>MKTIELFKFMISAKSQTPDDGGLLDFIQNYLDDFEAIRVDVEGVKNLFLYKKFSQGDHLCFAGHVDVVPAGDGWDSDPYIATERDGYIYGRGAQDMKSGVAAFVQAIKDTKHFNGTLSLLLTSDEEGEGTYGTIEVLNYLRDKSMLPDFAVVAEPTCEMVFGDAIKVGRRGSINGYITLRGKQGHAAYPEKSINPINLIAPKLANMAGVDLDNGDEFFSPSKFVITDIRAGMQVTNVTPNELKMMFNVRNTTLTSQKEIREFVEKNLEDLDYDLRLTQGSYPFKTDTKTKLVKNIDASIEQISGIKPKHSTAGGTSDARHMAPLGIDVIEFGVINDTIHAINERTTKDEVKKLYEVFKHLIDTWK</sequence>
<protein>
    <recommendedName>
        <fullName evidence="1">Succinyl-diaminopimelate desuccinylase</fullName>
        <shortName evidence="1">SDAP desuccinylase</shortName>
        <ecNumber evidence="1">3.5.1.18</ecNumber>
    </recommendedName>
    <alternativeName>
        <fullName evidence="1">N-succinyl-LL-2,6-diaminoheptanedioate amidohydrolase</fullName>
    </alternativeName>
</protein>
<feature type="chain" id="PRO_0000375759" description="Succinyl-diaminopimelate desuccinylase">
    <location>
        <begin position="1"/>
        <end position="365"/>
    </location>
</feature>
<feature type="active site" evidence="1">
    <location>
        <position position="66"/>
    </location>
</feature>
<feature type="active site" description="Proton acceptor" evidence="1">
    <location>
        <position position="125"/>
    </location>
</feature>
<feature type="binding site" evidence="1">
    <location>
        <position position="64"/>
    </location>
    <ligand>
        <name>Zn(2+)</name>
        <dbReference type="ChEBI" id="CHEBI:29105"/>
        <label>1</label>
    </ligand>
</feature>
<feature type="binding site" evidence="1">
    <location>
        <position position="95"/>
    </location>
    <ligand>
        <name>Zn(2+)</name>
        <dbReference type="ChEBI" id="CHEBI:29105"/>
        <label>1</label>
    </ligand>
</feature>
<feature type="binding site" evidence="1">
    <location>
        <position position="95"/>
    </location>
    <ligand>
        <name>Zn(2+)</name>
        <dbReference type="ChEBI" id="CHEBI:29105"/>
        <label>2</label>
    </ligand>
</feature>
<feature type="binding site" evidence="1">
    <location>
        <position position="126"/>
    </location>
    <ligand>
        <name>Zn(2+)</name>
        <dbReference type="ChEBI" id="CHEBI:29105"/>
        <label>2</label>
    </ligand>
</feature>
<feature type="binding site" evidence="1">
    <location>
        <position position="154"/>
    </location>
    <ligand>
        <name>Zn(2+)</name>
        <dbReference type="ChEBI" id="CHEBI:29105"/>
        <label>1</label>
    </ligand>
</feature>
<feature type="binding site" evidence="1">
    <location>
        <position position="339"/>
    </location>
    <ligand>
        <name>Zn(2+)</name>
        <dbReference type="ChEBI" id="CHEBI:29105"/>
        <label>2</label>
    </ligand>
</feature>
<keyword id="KW-0028">Amino-acid biosynthesis</keyword>
<keyword id="KW-0170">Cobalt</keyword>
<keyword id="KW-0220">Diaminopimelate biosynthesis</keyword>
<keyword id="KW-0378">Hydrolase</keyword>
<keyword id="KW-0457">Lysine biosynthesis</keyword>
<keyword id="KW-0479">Metal-binding</keyword>
<keyword id="KW-1185">Reference proteome</keyword>
<keyword id="KW-0862">Zinc</keyword>
<dbReference type="EC" id="3.5.1.18" evidence="1"/>
<dbReference type="EMBL" id="CP000153">
    <property type="protein sequence ID" value="ABB44722.1"/>
    <property type="molecule type" value="Genomic_DNA"/>
</dbReference>
<dbReference type="RefSeq" id="WP_011373074.1">
    <property type="nucleotide sequence ID" value="NC_007575.1"/>
</dbReference>
<dbReference type="SMR" id="Q30QK9"/>
<dbReference type="STRING" id="326298.Suden_1445"/>
<dbReference type="KEGG" id="tdn:Suden_1445"/>
<dbReference type="eggNOG" id="COG0624">
    <property type="taxonomic scope" value="Bacteria"/>
</dbReference>
<dbReference type="HOGENOM" id="CLU_021802_4_0_7"/>
<dbReference type="OrthoDB" id="5486471at2"/>
<dbReference type="UniPathway" id="UPA00034">
    <property type="reaction ID" value="UER00021"/>
</dbReference>
<dbReference type="Proteomes" id="UP000002714">
    <property type="component" value="Chromosome"/>
</dbReference>
<dbReference type="GO" id="GO:0008777">
    <property type="term" value="F:acetylornithine deacetylase activity"/>
    <property type="evidence" value="ECO:0007669"/>
    <property type="project" value="TreeGrafter"/>
</dbReference>
<dbReference type="GO" id="GO:0046872">
    <property type="term" value="F:metal ion binding"/>
    <property type="evidence" value="ECO:0007669"/>
    <property type="project" value="UniProtKB-KW"/>
</dbReference>
<dbReference type="GO" id="GO:0009014">
    <property type="term" value="F:succinyl-diaminopimelate desuccinylase activity"/>
    <property type="evidence" value="ECO:0007669"/>
    <property type="project" value="UniProtKB-EC"/>
</dbReference>
<dbReference type="GO" id="GO:0019877">
    <property type="term" value="P:diaminopimelate biosynthetic process"/>
    <property type="evidence" value="ECO:0007669"/>
    <property type="project" value="UniProtKB-KW"/>
</dbReference>
<dbReference type="GO" id="GO:0006526">
    <property type="term" value="P:L-arginine biosynthetic process"/>
    <property type="evidence" value="ECO:0007669"/>
    <property type="project" value="TreeGrafter"/>
</dbReference>
<dbReference type="GO" id="GO:0009089">
    <property type="term" value="P:lysine biosynthetic process via diaminopimelate"/>
    <property type="evidence" value="ECO:0007669"/>
    <property type="project" value="UniProtKB-UniPathway"/>
</dbReference>
<dbReference type="CDD" id="cd03891">
    <property type="entry name" value="M20_DapE_proteobac"/>
    <property type="match status" value="1"/>
</dbReference>
<dbReference type="Gene3D" id="1.10.150.900">
    <property type="match status" value="1"/>
</dbReference>
<dbReference type="Gene3D" id="3.30.70.360">
    <property type="match status" value="1"/>
</dbReference>
<dbReference type="Gene3D" id="3.40.630.10">
    <property type="entry name" value="Zn peptidases"/>
    <property type="match status" value="1"/>
</dbReference>
<dbReference type="HAMAP" id="MF_01690">
    <property type="entry name" value="DapE"/>
    <property type="match status" value="1"/>
</dbReference>
<dbReference type="InterPro" id="IPR001261">
    <property type="entry name" value="ArgE/DapE_CS"/>
</dbReference>
<dbReference type="InterPro" id="IPR036264">
    <property type="entry name" value="Bact_exopeptidase_dim_dom"/>
</dbReference>
<dbReference type="InterPro" id="IPR005941">
    <property type="entry name" value="DapE_proteobac"/>
</dbReference>
<dbReference type="InterPro" id="IPR002933">
    <property type="entry name" value="Peptidase_M20"/>
</dbReference>
<dbReference type="InterPro" id="IPR011650">
    <property type="entry name" value="Peptidase_M20_dimer"/>
</dbReference>
<dbReference type="InterPro" id="IPR050072">
    <property type="entry name" value="Peptidase_M20A"/>
</dbReference>
<dbReference type="NCBIfam" id="TIGR01246">
    <property type="entry name" value="dapE_proteo"/>
    <property type="match status" value="1"/>
</dbReference>
<dbReference type="NCBIfam" id="NF009557">
    <property type="entry name" value="PRK13009.1"/>
    <property type="match status" value="1"/>
</dbReference>
<dbReference type="PANTHER" id="PTHR43808">
    <property type="entry name" value="ACETYLORNITHINE DEACETYLASE"/>
    <property type="match status" value="1"/>
</dbReference>
<dbReference type="PANTHER" id="PTHR43808:SF31">
    <property type="entry name" value="N-ACETYL-L-CITRULLINE DEACETYLASE"/>
    <property type="match status" value="1"/>
</dbReference>
<dbReference type="Pfam" id="PF07687">
    <property type="entry name" value="M20_dimer"/>
    <property type="match status" value="1"/>
</dbReference>
<dbReference type="Pfam" id="PF01546">
    <property type="entry name" value="Peptidase_M20"/>
    <property type="match status" value="1"/>
</dbReference>
<dbReference type="SUPFAM" id="SSF55031">
    <property type="entry name" value="Bacterial exopeptidase dimerisation domain"/>
    <property type="match status" value="1"/>
</dbReference>
<dbReference type="SUPFAM" id="SSF53187">
    <property type="entry name" value="Zn-dependent exopeptidases"/>
    <property type="match status" value="1"/>
</dbReference>
<dbReference type="PROSITE" id="PS00759">
    <property type="entry name" value="ARGE_DAPE_CPG2_2"/>
    <property type="match status" value="1"/>
</dbReference>
<organism>
    <name type="scientific">Sulfurimonas denitrificans (strain ATCC 33889 / DSM 1251)</name>
    <name type="common">Thiomicrospira denitrificans (strain ATCC 33889 / DSM 1251)</name>
    <dbReference type="NCBI Taxonomy" id="326298"/>
    <lineage>
        <taxon>Bacteria</taxon>
        <taxon>Pseudomonadati</taxon>
        <taxon>Campylobacterota</taxon>
        <taxon>Epsilonproteobacteria</taxon>
        <taxon>Campylobacterales</taxon>
        <taxon>Sulfurimonadaceae</taxon>
        <taxon>Sulfurimonas</taxon>
    </lineage>
</organism>
<gene>
    <name evidence="1" type="primary">dapE</name>
    <name type="ordered locus">Suden_1445</name>
</gene>
<comment type="function">
    <text evidence="1">Catalyzes the hydrolysis of N-succinyl-L,L-diaminopimelic acid (SDAP), forming succinate and LL-2,6-diaminopimelate (DAP), an intermediate involved in the bacterial biosynthesis of lysine and meso-diaminopimelic acid, an essential component of bacterial cell walls.</text>
</comment>
<comment type="catalytic activity">
    <reaction evidence="1">
        <text>N-succinyl-(2S,6S)-2,6-diaminopimelate + H2O = (2S,6S)-2,6-diaminopimelate + succinate</text>
        <dbReference type="Rhea" id="RHEA:22608"/>
        <dbReference type="ChEBI" id="CHEBI:15377"/>
        <dbReference type="ChEBI" id="CHEBI:30031"/>
        <dbReference type="ChEBI" id="CHEBI:57609"/>
        <dbReference type="ChEBI" id="CHEBI:58087"/>
        <dbReference type="EC" id="3.5.1.18"/>
    </reaction>
</comment>
<comment type="cofactor">
    <cofactor evidence="1">
        <name>Zn(2+)</name>
        <dbReference type="ChEBI" id="CHEBI:29105"/>
    </cofactor>
    <cofactor evidence="1">
        <name>Co(2+)</name>
        <dbReference type="ChEBI" id="CHEBI:48828"/>
    </cofactor>
    <text evidence="1">Binds 2 Zn(2+) or Co(2+) ions per subunit.</text>
</comment>
<comment type="pathway">
    <text evidence="1">Amino-acid biosynthesis; L-lysine biosynthesis via DAP pathway; LL-2,6-diaminopimelate from (S)-tetrahydrodipicolinate (succinylase route): step 3/3.</text>
</comment>
<comment type="subunit">
    <text evidence="1">Homodimer.</text>
</comment>
<comment type="similarity">
    <text evidence="1">Belongs to the peptidase M20A family. DapE subfamily.</text>
</comment>
<name>DAPE_SULDN</name>